<sequence length="365" mass="41029">MLIFPLINDTSRKIIHIDMDAFFAAVEERDNPALKGKPVVIGKDPRETGGRGVVSTCNYEARKYGIHSAMSSKEAYERCPKAIFISGNYEKYRTVGDQIRRIFKRYTDVVEPMSIDEAYLDVTDNKLGIKSAVKIAKLIQHDIWKEVGLTCSAGVSYNKFLAKLASDFEKPHGLTLVLKEDALCFLAKLPIEKFHGVGKKSVEKLHDMGIYTGQDLLAVPEMTLIDHFGRFGFDLYRKARGISNSPVKSDRIRKSIGSERTYAKLLYQETDIKAEISKNAKRVVALLQDHKKLGKTIVLKVRYADFITLTKRVTLPELTRDAAQIEQVAESIFDTLPEHTVGIRLLGVTMTNLEDKMADIALDLS</sequence>
<organism>
    <name type="scientific">Streptococcus pyogenes serotype M3 (strain SSI-1)</name>
    <dbReference type="NCBI Taxonomy" id="193567"/>
    <lineage>
        <taxon>Bacteria</taxon>
        <taxon>Bacillati</taxon>
        <taxon>Bacillota</taxon>
        <taxon>Bacilli</taxon>
        <taxon>Lactobacillales</taxon>
        <taxon>Streptococcaceae</taxon>
        <taxon>Streptococcus</taxon>
    </lineage>
</organism>
<dbReference type="EC" id="2.7.7.7" evidence="1"/>
<dbReference type="EMBL" id="BA000034">
    <property type="protein sequence ID" value="BAC63367.1"/>
    <property type="molecule type" value="Genomic_DNA"/>
</dbReference>
<dbReference type="RefSeq" id="WP_011054974.1">
    <property type="nucleotide sequence ID" value="NC_004606.1"/>
</dbReference>
<dbReference type="SMR" id="P0DA79"/>
<dbReference type="KEGG" id="sps:SPs0272"/>
<dbReference type="HOGENOM" id="CLU_012348_1_2_9"/>
<dbReference type="GO" id="GO:0005829">
    <property type="term" value="C:cytosol"/>
    <property type="evidence" value="ECO:0007669"/>
    <property type="project" value="TreeGrafter"/>
</dbReference>
<dbReference type="GO" id="GO:0003684">
    <property type="term" value="F:damaged DNA binding"/>
    <property type="evidence" value="ECO:0007669"/>
    <property type="project" value="InterPro"/>
</dbReference>
<dbReference type="GO" id="GO:0003887">
    <property type="term" value="F:DNA-directed DNA polymerase activity"/>
    <property type="evidence" value="ECO:0007669"/>
    <property type="project" value="UniProtKB-UniRule"/>
</dbReference>
<dbReference type="GO" id="GO:0000287">
    <property type="term" value="F:magnesium ion binding"/>
    <property type="evidence" value="ECO:0007669"/>
    <property type="project" value="UniProtKB-UniRule"/>
</dbReference>
<dbReference type="GO" id="GO:0006261">
    <property type="term" value="P:DNA-templated DNA replication"/>
    <property type="evidence" value="ECO:0007669"/>
    <property type="project" value="UniProtKB-UniRule"/>
</dbReference>
<dbReference type="GO" id="GO:0042276">
    <property type="term" value="P:error-prone translesion synthesis"/>
    <property type="evidence" value="ECO:0007669"/>
    <property type="project" value="TreeGrafter"/>
</dbReference>
<dbReference type="GO" id="GO:0009432">
    <property type="term" value="P:SOS response"/>
    <property type="evidence" value="ECO:0007669"/>
    <property type="project" value="TreeGrafter"/>
</dbReference>
<dbReference type="CDD" id="cd03586">
    <property type="entry name" value="PolY_Pol_IV_kappa"/>
    <property type="match status" value="1"/>
</dbReference>
<dbReference type="FunFam" id="3.30.1490.100:FF:000004">
    <property type="entry name" value="DNA polymerase IV"/>
    <property type="match status" value="1"/>
</dbReference>
<dbReference type="FunFam" id="3.40.1170.60:FF:000001">
    <property type="entry name" value="DNA polymerase IV"/>
    <property type="match status" value="1"/>
</dbReference>
<dbReference type="Gene3D" id="3.30.70.270">
    <property type="match status" value="1"/>
</dbReference>
<dbReference type="Gene3D" id="3.40.1170.60">
    <property type="match status" value="1"/>
</dbReference>
<dbReference type="Gene3D" id="1.10.150.20">
    <property type="entry name" value="5' to 3' exonuclease, C-terminal subdomain"/>
    <property type="match status" value="1"/>
</dbReference>
<dbReference type="Gene3D" id="3.30.1490.100">
    <property type="entry name" value="DNA polymerase, Y-family, little finger domain"/>
    <property type="match status" value="1"/>
</dbReference>
<dbReference type="HAMAP" id="MF_01113">
    <property type="entry name" value="DNApol_IV"/>
    <property type="match status" value="1"/>
</dbReference>
<dbReference type="InterPro" id="IPR043502">
    <property type="entry name" value="DNA/RNA_pol_sf"/>
</dbReference>
<dbReference type="InterPro" id="IPR036775">
    <property type="entry name" value="DNA_pol_Y-fam_lit_finger_sf"/>
</dbReference>
<dbReference type="InterPro" id="IPR017961">
    <property type="entry name" value="DNA_pol_Y-fam_little_finger"/>
</dbReference>
<dbReference type="InterPro" id="IPR050116">
    <property type="entry name" value="DNA_polymerase-Y"/>
</dbReference>
<dbReference type="InterPro" id="IPR022880">
    <property type="entry name" value="DNApol_IV"/>
</dbReference>
<dbReference type="InterPro" id="IPR024728">
    <property type="entry name" value="PolY_HhH_motif"/>
</dbReference>
<dbReference type="InterPro" id="IPR043128">
    <property type="entry name" value="Rev_trsase/Diguanyl_cyclase"/>
</dbReference>
<dbReference type="InterPro" id="IPR001126">
    <property type="entry name" value="UmuC"/>
</dbReference>
<dbReference type="NCBIfam" id="NF002677">
    <property type="entry name" value="PRK02406.1"/>
    <property type="match status" value="1"/>
</dbReference>
<dbReference type="PANTHER" id="PTHR11076:SF33">
    <property type="entry name" value="DNA POLYMERASE KAPPA"/>
    <property type="match status" value="1"/>
</dbReference>
<dbReference type="PANTHER" id="PTHR11076">
    <property type="entry name" value="DNA REPAIR POLYMERASE UMUC / TRANSFERASE FAMILY MEMBER"/>
    <property type="match status" value="1"/>
</dbReference>
<dbReference type="Pfam" id="PF00817">
    <property type="entry name" value="IMS"/>
    <property type="match status" value="1"/>
</dbReference>
<dbReference type="Pfam" id="PF11799">
    <property type="entry name" value="IMS_C"/>
    <property type="match status" value="1"/>
</dbReference>
<dbReference type="Pfam" id="PF11798">
    <property type="entry name" value="IMS_HHH"/>
    <property type="match status" value="1"/>
</dbReference>
<dbReference type="SUPFAM" id="SSF56672">
    <property type="entry name" value="DNA/RNA polymerases"/>
    <property type="match status" value="1"/>
</dbReference>
<dbReference type="SUPFAM" id="SSF100879">
    <property type="entry name" value="Lesion bypass DNA polymerase (Y-family), little finger domain"/>
    <property type="match status" value="1"/>
</dbReference>
<dbReference type="PROSITE" id="PS50173">
    <property type="entry name" value="UMUC"/>
    <property type="match status" value="1"/>
</dbReference>
<gene>
    <name evidence="1" type="primary">dinB</name>
    <name type="synonym">dinP</name>
    <name type="ordered locus">SPs0272</name>
</gene>
<feature type="chain" id="PRO_0000411327" description="DNA polymerase IV">
    <location>
        <begin position="1"/>
        <end position="365"/>
    </location>
</feature>
<feature type="domain" description="UmuC" evidence="1">
    <location>
        <begin position="14"/>
        <end position="198"/>
    </location>
</feature>
<feature type="active site" evidence="1">
    <location>
        <position position="117"/>
    </location>
</feature>
<feature type="binding site" evidence="1">
    <location>
        <position position="18"/>
    </location>
    <ligand>
        <name>Mg(2+)</name>
        <dbReference type="ChEBI" id="CHEBI:18420"/>
    </ligand>
</feature>
<feature type="binding site" evidence="1">
    <location>
        <position position="116"/>
    </location>
    <ligand>
        <name>Mg(2+)</name>
        <dbReference type="ChEBI" id="CHEBI:18420"/>
    </ligand>
</feature>
<feature type="site" description="Substrate discrimination" evidence="1">
    <location>
        <position position="23"/>
    </location>
</feature>
<evidence type="ECO:0000255" key="1">
    <source>
        <dbReference type="HAMAP-Rule" id="MF_01113"/>
    </source>
</evidence>
<proteinExistence type="inferred from homology"/>
<accession>P0DA79</accession>
<accession>Q8K5Y2</accession>
<protein>
    <recommendedName>
        <fullName evidence="1">DNA polymerase IV</fullName>
        <shortName evidence="1">Pol IV</shortName>
        <ecNumber evidence="1">2.7.7.7</ecNumber>
    </recommendedName>
</protein>
<keyword id="KW-0963">Cytoplasm</keyword>
<keyword id="KW-0227">DNA damage</keyword>
<keyword id="KW-0234">DNA repair</keyword>
<keyword id="KW-0235">DNA replication</keyword>
<keyword id="KW-0238">DNA-binding</keyword>
<keyword id="KW-0239">DNA-directed DNA polymerase</keyword>
<keyword id="KW-0460">Magnesium</keyword>
<keyword id="KW-0479">Metal-binding</keyword>
<keyword id="KW-0515">Mutator protein</keyword>
<keyword id="KW-0548">Nucleotidyltransferase</keyword>
<keyword id="KW-0808">Transferase</keyword>
<name>DPO4_STRPQ</name>
<comment type="function">
    <text evidence="1">Poorly processive, error-prone DNA polymerase involved in untargeted mutagenesis. Copies undamaged DNA at stalled replication forks, which arise in vivo from mismatched or misaligned primer ends. These misaligned primers can be extended by PolIV. Exhibits no 3'-5' exonuclease (proofreading) activity. May be involved in translesional synthesis, in conjunction with the beta clamp from PolIII.</text>
</comment>
<comment type="catalytic activity">
    <reaction evidence="1">
        <text>DNA(n) + a 2'-deoxyribonucleoside 5'-triphosphate = DNA(n+1) + diphosphate</text>
        <dbReference type="Rhea" id="RHEA:22508"/>
        <dbReference type="Rhea" id="RHEA-COMP:17339"/>
        <dbReference type="Rhea" id="RHEA-COMP:17340"/>
        <dbReference type="ChEBI" id="CHEBI:33019"/>
        <dbReference type="ChEBI" id="CHEBI:61560"/>
        <dbReference type="ChEBI" id="CHEBI:173112"/>
        <dbReference type="EC" id="2.7.7.7"/>
    </reaction>
</comment>
<comment type="cofactor">
    <cofactor evidence="1">
        <name>Mg(2+)</name>
        <dbReference type="ChEBI" id="CHEBI:18420"/>
    </cofactor>
    <text evidence="1">Binds 2 magnesium ions per subunit.</text>
</comment>
<comment type="subunit">
    <text evidence="1">Monomer.</text>
</comment>
<comment type="subcellular location">
    <subcellularLocation>
        <location evidence="1">Cytoplasm</location>
    </subcellularLocation>
</comment>
<comment type="similarity">
    <text evidence="1">Belongs to the DNA polymerase type-Y family.</text>
</comment>
<reference key="1">
    <citation type="journal article" date="2003" name="Genome Res.">
        <title>Genome sequence of an M3 strain of Streptococcus pyogenes reveals a large-scale genomic rearrangement in invasive strains and new insights into phage evolution.</title>
        <authorList>
            <person name="Nakagawa I."/>
            <person name="Kurokawa K."/>
            <person name="Yamashita A."/>
            <person name="Nakata M."/>
            <person name="Tomiyasu Y."/>
            <person name="Okahashi N."/>
            <person name="Kawabata S."/>
            <person name="Yamazaki K."/>
            <person name="Shiba T."/>
            <person name="Yasunaga T."/>
            <person name="Hayashi H."/>
            <person name="Hattori M."/>
            <person name="Hamada S."/>
        </authorList>
    </citation>
    <scope>NUCLEOTIDE SEQUENCE [LARGE SCALE GENOMIC DNA]</scope>
    <source>
        <strain>SSI-1</strain>
    </source>
</reference>